<keyword id="KW-1185">Reference proteome</keyword>
<keyword id="KW-0687">Ribonucleoprotein</keyword>
<keyword id="KW-0689">Ribosomal protein</keyword>
<keyword id="KW-0694">RNA-binding</keyword>
<keyword id="KW-0699">rRNA-binding</keyword>
<reference key="1">
    <citation type="submission" date="2006-02" db="EMBL/GenBank/DDBJ databases">
        <title>Complete sequence of chromosome of Jannaschia sp. CCS1.</title>
        <authorList>
            <consortium name="US DOE Joint Genome Institute"/>
            <person name="Copeland A."/>
            <person name="Lucas S."/>
            <person name="Lapidus A."/>
            <person name="Barry K."/>
            <person name="Detter J.C."/>
            <person name="Glavina del Rio T."/>
            <person name="Hammon N."/>
            <person name="Israni S."/>
            <person name="Pitluck S."/>
            <person name="Brettin T."/>
            <person name="Bruce D."/>
            <person name="Han C."/>
            <person name="Tapia R."/>
            <person name="Gilna P."/>
            <person name="Chertkov O."/>
            <person name="Saunders E."/>
            <person name="Schmutz J."/>
            <person name="Larimer F."/>
            <person name="Land M."/>
            <person name="Kyrpides N."/>
            <person name="Lykidis A."/>
            <person name="Moran M.A."/>
            <person name="Belas R."/>
            <person name="Ye W."/>
            <person name="Buchan A."/>
            <person name="Gonzalez J.M."/>
            <person name="Schell M.A."/>
            <person name="Richardson P."/>
        </authorList>
    </citation>
    <scope>NUCLEOTIDE SEQUENCE [LARGE SCALE GENOMIC DNA]</scope>
    <source>
        <strain>CCS1</strain>
    </source>
</reference>
<accession>Q28RX4</accession>
<name>RS18_JANSC</name>
<gene>
    <name evidence="1" type="primary">rpsR</name>
    <name type="ordered locus">Jann_1621</name>
</gene>
<feature type="chain" id="PRO_1000003511" description="Small ribosomal subunit protein bS18">
    <location>
        <begin position="1"/>
        <end position="75"/>
    </location>
</feature>
<feature type="region of interest" description="Disordered" evidence="2">
    <location>
        <begin position="1"/>
        <end position="21"/>
    </location>
</feature>
<feature type="compositionally biased region" description="Basic residues" evidence="2">
    <location>
        <begin position="1"/>
        <end position="11"/>
    </location>
</feature>
<sequence length="75" mass="8618">MAAKPFFRRRKTDPFEGENAPKIDYKDTRLLQRYISERGKIVPSRITAVGAKNQRALAKAIKRARFLALLPYAVK</sequence>
<dbReference type="EMBL" id="CP000264">
    <property type="protein sequence ID" value="ABD54538.1"/>
    <property type="molecule type" value="Genomic_DNA"/>
</dbReference>
<dbReference type="RefSeq" id="WP_011454743.1">
    <property type="nucleotide sequence ID" value="NC_007802.1"/>
</dbReference>
<dbReference type="SMR" id="Q28RX4"/>
<dbReference type="STRING" id="290400.Jann_1621"/>
<dbReference type="KEGG" id="jan:Jann_1621"/>
<dbReference type="eggNOG" id="COG0238">
    <property type="taxonomic scope" value="Bacteria"/>
</dbReference>
<dbReference type="HOGENOM" id="CLU_148710_2_3_5"/>
<dbReference type="OrthoDB" id="9812008at2"/>
<dbReference type="Proteomes" id="UP000008326">
    <property type="component" value="Chromosome"/>
</dbReference>
<dbReference type="GO" id="GO:0022627">
    <property type="term" value="C:cytosolic small ribosomal subunit"/>
    <property type="evidence" value="ECO:0007669"/>
    <property type="project" value="TreeGrafter"/>
</dbReference>
<dbReference type="GO" id="GO:0070181">
    <property type="term" value="F:small ribosomal subunit rRNA binding"/>
    <property type="evidence" value="ECO:0007669"/>
    <property type="project" value="TreeGrafter"/>
</dbReference>
<dbReference type="GO" id="GO:0003735">
    <property type="term" value="F:structural constituent of ribosome"/>
    <property type="evidence" value="ECO:0007669"/>
    <property type="project" value="InterPro"/>
</dbReference>
<dbReference type="GO" id="GO:0006412">
    <property type="term" value="P:translation"/>
    <property type="evidence" value="ECO:0007669"/>
    <property type="project" value="UniProtKB-UniRule"/>
</dbReference>
<dbReference type="Gene3D" id="4.10.640.10">
    <property type="entry name" value="Ribosomal protein S18"/>
    <property type="match status" value="1"/>
</dbReference>
<dbReference type="HAMAP" id="MF_00270">
    <property type="entry name" value="Ribosomal_bS18"/>
    <property type="match status" value="1"/>
</dbReference>
<dbReference type="InterPro" id="IPR001648">
    <property type="entry name" value="Ribosomal_bS18"/>
</dbReference>
<dbReference type="InterPro" id="IPR018275">
    <property type="entry name" value="Ribosomal_bS18_CS"/>
</dbReference>
<dbReference type="InterPro" id="IPR036870">
    <property type="entry name" value="Ribosomal_bS18_sf"/>
</dbReference>
<dbReference type="NCBIfam" id="TIGR00165">
    <property type="entry name" value="S18"/>
    <property type="match status" value="1"/>
</dbReference>
<dbReference type="PANTHER" id="PTHR13479">
    <property type="entry name" value="30S RIBOSOMAL PROTEIN S18"/>
    <property type="match status" value="1"/>
</dbReference>
<dbReference type="PANTHER" id="PTHR13479:SF40">
    <property type="entry name" value="SMALL RIBOSOMAL SUBUNIT PROTEIN BS18M"/>
    <property type="match status" value="1"/>
</dbReference>
<dbReference type="Pfam" id="PF01084">
    <property type="entry name" value="Ribosomal_S18"/>
    <property type="match status" value="1"/>
</dbReference>
<dbReference type="PRINTS" id="PR00974">
    <property type="entry name" value="RIBOSOMALS18"/>
</dbReference>
<dbReference type="SUPFAM" id="SSF46911">
    <property type="entry name" value="Ribosomal protein S18"/>
    <property type="match status" value="1"/>
</dbReference>
<dbReference type="PROSITE" id="PS00057">
    <property type="entry name" value="RIBOSOMAL_S18"/>
    <property type="match status" value="1"/>
</dbReference>
<protein>
    <recommendedName>
        <fullName evidence="1">Small ribosomal subunit protein bS18</fullName>
    </recommendedName>
    <alternativeName>
        <fullName evidence="3">30S ribosomal protein S18</fullName>
    </alternativeName>
</protein>
<proteinExistence type="inferred from homology"/>
<comment type="function">
    <text evidence="1">Binds as a heterodimer with protein bS6 to the central domain of the 16S rRNA, where it helps stabilize the platform of the 30S subunit.</text>
</comment>
<comment type="subunit">
    <text evidence="1">Part of the 30S ribosomal subunit. Forms a tight heterodimer with protein bS6.</text>
</comment>
<comment type="similarity">
    <text evidence="1">Belongs to the bacterial ribosomal protein bS18 family.</text>
</comment>
<organism>
    <name type="scientific">Jannaschia sp. (strain CCS1)</name>
    <dbReference type="NCBI Taxonomy" id="290400"/>
    <lineage>
        <taxon>Bacteria</taxon>
        <taxon>Pseudomonadati</taxon>
        <taxon>Pseudomonadota</taxon>
        <taxon>Alphaproteobacteria</taxon>
        <taxon>Rhodobacterales</taxon>
        <taxon>Roseobacteraceae</taxon>
        <taxon>Jannaschia</taxon>
    </lineage>
</organism>
<evidence type="ECO:0000255" key="1">
    <source>
        <dbReference type="HAMAP-Rule" id="MF_00270"/>
    </source>
</evidence>
<evidence type="ECO:0000256" key="2">
    <source>
        <dbReference type="SAM" id="MobiDB-lite"/>
    </source>
</evidence>
<evidence type="ECO:0000305" key="3"/>